<comment type="function">
    <text evidence="1">Catalyzes the decarboxylation of orotidine 5'-monophosphate (OMP) to uridine 5'-monophosphate (UMP).</text>
</comment>
<comment type="catalytic activity">
    <reaction evidence="1">
        <text>orotidine 5'-phosphate + H(+) = UMP + CO2</text>
        <dbReference type="Rhea" id="RHEA:11596"/>
        <dbReference type="ChEBI" id="CHEBI:15378"/>
        <dbReference type="ChEBI" id="CHEBI:16526"/>
        <dbReference type="ChEBI" id="CHEBI:57538"/>
        <dbReference type="ChEBI" id="CHEBI:57865"/>
        <dbReference type="EC" id="4.1.1.23"/>
    </reaction>
</comment>
<comment type="pathway">
    <text evidence="1">Pyrimidine metabolism; UMP biosynthesis via de novo pathway; UMP from orotate: step 2/2.</text>
</comment>
<comment type="subunit">
    <text evidence="1">Homodimer.</text>
</comment>
<comment type="similarity">
    <text evidence="1">Belongs to the OMP decarboxylase family. Type 1 subfamily.</text>
</comment>
<dbReference type="EC" id="4.1.1.23" evidence="1"/>
<dbReference type="EMBL" id="CP001291">
    <property type="protein sequence ID" value="ACK72425.1"/>
    <property type="molecule type" value="Genomic_DNA"/>
</dbReference>
<dbReference type="RefSeq" id="WP_015956010.1">
    <property type="nucleotide sequence ID" value="NC_011729.1"/>
</dbReference>
<dbReference type="SMR" id="B7KL53"/>
<dbReference type="STRING" id="65393.PCC7424_4051"/>
<dbReference type="KEGG" id="cyc:PCC7424_4051"/>
<dbReference type="eggNOG" id="COG0284">
    <property type="taxonomic scope" value="Bacteria"/>
</dbReference>
<dbReference type="HOGENOM" id="CLU_067069_1_0_3"/>
<dbReference type="OrthoDB" id="9806203at2"/>
<dbReference type="UniPathway" id="UPA00070">
    <property type="reaction ID" value="UER00120"/>
</dbReference>
<dbReference type="Proteomes" id="UP000002384">
    <property type="component" value="Chromosome"/>
</dbReference>
<dbReference type="GO" id="GO:0005829">
    <property type="term" value="C:cytosol"/>
    <property type="evidence" value="ECO:0007669"/>
    <property type="project" value="TreeGrafter"/>
</dbReference>
<dbReference type="GO" id="GO:0004590">
    <property type="term" value="F:orotidine-5'-phosphate decarboxylase activity"/>
    <property type="evidence" value="ECO:0007669"/>
    <property type="project" value="UniProtKB-UniRule"/>
</dbReference>
<dbReference type="GO" id="GO:0006207">
    <property type="term" value="P:'de novo' pyrimidine nucleobase biosynthetic process"/>
    <property type="evidence" value="ECO:0007669"/>
    <property type="project" value="InterPro"/>
</dbReference>
<dbReference type="GO" id="GO:0044205">
    <property type="term" value="P:'de novo' UMP biosynthetic process"/>
    <property type="evidence" value="ECO:0007669"/>
    <property type="project" value="UniProtKB-UniRule"/>
</dbReference>
<dbReference type="CDD" id="cd04725">
    <property type="entry name" value="OMP_decarboxylase_like"/>
    <property type="match status" value="1"/>
</dbReference>
<dbReference type="FunFam" id="3.20.20.70:FF:000015">
    <property type="entry name" value="Orotidine 5'-phosphate decarboxylase"/>
    <property type="match status" value="1"/>
</dbReference>
<dbReference type="Gene3D" id="3.20.20.70">
    <property type="entry name" value="Aldolase class I"/>
    <property type="match status" value="1"/>
</dbReference>
<dbReference type="HAMAP" id="MF_01200_B">
    <property type="entry name" value="OMPdecase_type1_B"/>
    <property type="match status" value="1"/>
</dbReference>
<dbReference type="InterPro" id="IPR013785">
    <property type="entry name" value="Aldolase_TIM"/>
</dbReference>
<dbReference type="InterPro" id="IPR014732">
    <property type="entry name" value="OMPdecase"/>
</dbReference>
<dbReference type="InterPro" id="IPR018089">
    <property type="entry name" value="OMPdecase_AS"/>
</dbReference>
<dbReference type="InterPro" id="IPR047596">
    <property type="entry name" value="OMPdecase_bac"/>
</dbReference>
<dbReference type="InterPro" id="IPR001754">
    <property type="entry name" value="OMPdeCOase_dom"/>
</dbReference>
<dbReference type="InterPro" id="IPR011060">
    <property type="entry name" value="RibuloseP-bd_barrel"/>
</dbReference>
<dbReference type="NCBIfam" id="NF001273">
    <property type="entry name" value="PRK00230.1"/>
    <property type="match status" value="1"/>
</dbReference>
<dbReference type="NCBIfam" id="TIGR01740">
    <property type="entry name" value="pyrF"/>
    <property type="match status" value="1"/>
</dbReference>
<dbReference type="PANTHER" id="PTHR32119">
    <property type="entry name" value="OROTIDINE 5'-PHOSPHATE DECARBOXYLASE"/>
    <property type="match status" value="1"/>
</dbReference>
<dbReference type="PANTHER" id="PTHR32119:SF2">
    <property type="entry name" value="OROTIDINE 5'-PHOSPHATE DECARBOXYLASE"/>
    <property type="match status" value="1"/>
</dbReference>
<dbReference type="Pfam" id="PF00215">
    <property type="entry name" value="OMPdecase"/>
    <property type="match status" value="1"/>
</dbReference>
<dbReference type="SMART" id="SM00934">
    <property type="entry name" value="OMPdecase"/>
    <property type="match status" value="1"/>
</dbReference>
<dbReference type="SUPFAM" id="SSF51366">
    <property type="entry name" value="Ribulose-phoshate binding barrel"/>
    <property type="match status" value="1"/>
</dbReference>
<dbReference type="PROSITE" id="PS00156">
    <property type="entry name" value="OMPDECASE"/>
    <property type="match status" value="1"/>
</dbReference>
<name>PYRF_GLOC7</name>
<feature type="chain" id="PRO_1000138519" description="Orotidine 5'-phosphate decarboxylase">
    <location>
        <begin position="1"/>
        <end position="232"/>
    </location>
</feature>
<feature type="active site" description="Proton donor" evidence="1">
    <location>
        <position position="61"/>
    </location>
</feature>
<feature type="binding site" evidence="1">
    <location>
        <position position="11"/>
    </location>
    <ligand>
        <name>substrate</name>
    </ligand>
</feature>
<feature type="binding site" evidence="1">
    <location>
        <position position="32"/>
    </location>
    <ligand>
        <name>substrate</name>
    </ligand>
</feature>
<feature type="binding site" evidence="1">
    <location>
        <begin position="59"/>
        <end position="68"/>
    </location>
    <ligand>
        <name>substrate</name>
    </ligand>
</feature>
<feature type="binding site" evidence="1">
    <location>
        <position position="118"/>
    </location>
    <ligand>
        <name>substrate</name>
    </ligand>
</feature>
<feature type="binding site" evidence="1">
    <location>
        <position position="180"/>
    </location>
    <ligand>
        <name>substrate</name>
    </ligand>
</feature>
<feature type="binding site" evidence="1">
    <location>
        <position position="189"/>
    </location>
    <ligand>
        <name>substrate</name>
    </ligand>
</feature>
<feature type="binding site" evidence="1">
    <location>
        <position position="209"/>
    </location>
    <ligand>
        <name>substrate</name>
    </ligand>
</feature>
<feature type="binding site" evidence="1">
    <location>
        <position position="210"/>
    </location>
    <ligand>
        <name>substrate</name>
    </ligand>
</feature>
<protein>
    <recommendedName>
        <fullName evidence="1">Orotidine 5'-phosphate decarboxylase</fullName>
        <ecNumber evidence="1">4.1.1.23</ecNumber>
    </recommendedName>
    <alternativeName>
        <fullName evidence="1">OMP decarboxylase</fullName>
        <shortName evidence="1">OMPDCase</shortName>
        <shortName evidence="1">OMPdecase</shortName>
    </alternativeName>
</protein>
<accession>B7KL53</accession>
<evidence type="ECO:0000255" key="1">
    <source>
        <dbReference type="HAMAP-Rule" id="MF_01200"/>
    </source>
</evidence>
<keyword id="KW-0210">Decarboxylase</keyword>
<keyword id="KW-0456">Lyase</keyword>
<keyword id="KW-0665">Pyrimidine biosynthesis</keyword>
<keyword id="KW-1185">Reference proteome</keyword>
<proteinExistence type="inferred from homology"/>
<reference key="1">
    <citation type="journal article" date="2011" name="MBio">
        <title>Novel metabolic attributes of the genus Cyanothece, comprising a group of unicellular nitrogen-fixing Cyanobacteria.</title>
        <authorList>
            <person name="Bandyopadhyay A."/>
            <person name="Elvitigala T."/>
            <person name="Welsh E."/>
            <person name="Stockel J."/>
            <person name="Liberton M."/>
            <person name="Min H."/>
            <person name="Sherman L.A."/>
            <person name="Pakrasi H.B."/>
        </authorList>
    </citation>
    <scope>NUCLEOTIDE SEQUENCE [LARGE SCALE GENOMIC DNA]</scope>
    <source>
        <strain>PCC 7424</strain>
    </source>
</reference>
<sequence>MINDRVIVPLDVPTLEEAIALLDLLPRVSFWKVGLELFVSAGPSILEILKEREKRIFLDLKFHDIPNTVAGACRSATKYGVDLLTLHATAGRKALSQAVEAISTGDKPPKLLAISLLTSINSRELAFDLKIPLELPEYALQMALLAQETGIDGAVCSPQEVSQLRQVCGSDFLLVCPGVRPTWAEAGDQRRVMTPVSAIKAGADYLVIGRPITTASNPVEAWEKVCQELAEV</sequence>
<organism>
    <name type="scientific">Gloeothece citriformis (strain PCC 7424)</name>
    <name type="common">Cyanothece sp. (strain PCC 7424)</name>
    <dbReference type="NCBI Taxonomy" id="65393"/>
    <lineage>
        <taxon>Bacteria</taxon>
        <taxon>Bacillati</taxon>
        <taxon>Cyanobacteriota</taxon>
        <taxon>Cyanophyceae</taxon>
        <taxon>Oscillatoriophycideae</taxon>
        <taxon>Chroococcales</taxon>
        <taxon>Aphanothecaceae</taxon>
        <taxon>Gloeothece</taxon>
        <taxon>Gloeothece citriformis</taxon>
    </lineage>
</organism>
<gene>
    <name evidence="1" type="primary">pyrF</name>
    <name type="ordered locus">PCC7424_4051</name>
</gene>